<keyword id="KW-0028">Amino-acid biosynthesis</keyword>
<keyword id="KW-0057">Aromatic amino acid biosynthesis</keyword>
<keyword id="KW-0170">Cobalt</keyword>
<keyword id="KW-0963">Cytoplasm</keyword>
<keyword id="KW-0456">Lyase</keyword>
<keyword id="KW-0479">Metal-binding</keyword>
<keyword id="KW-0520">NAD</keyword>
<keyword id="KW-0547">Nucleotide-binding</keyword>
<keyword id="KW-1185">Reference proteome</keyword>
<keyword id="KW-0862">Zinc</keyword>
<name>AROB_AERHH</name>
<accession>A0KN28</accession>
<feature type="chain" id="PRO_1000094447" description="3-dehydroquinate synthase">
    <location>
        <begin position="1"/>
        <end position="360"/>
    </location>
</feature>
<feature type="binding site" evidence="1">
    <location>
        <begin position="69"/>
        <end position="74"/>
    </location>
    <ligand>
        <name>NAD(+)</name>
        <dbReference type="ChEBI" id="CHEBI:57540"/>
    </ligand>
</feature>
<feature type="binding site" evidence="1">
    <location>
        <begin position="103"/>
        <end position="107"/>
    </location>
    <ligand>
        <name>NAD(+)</name>
        <dbReference type="ChEBI" id="CHEBI:57540"/>
    </ligand>
</feature>
<feature type="binding site" evidence="1">
    <location>
        <begin position="127"/>
        <end position="128"/>
    </location>
    <ligand>
        <name>NAD(+)</name>
        <dbReference type="ChEBI" id="CHEBI:57540"/>
    </ligand>
</feature>
<feature type="binding site" evidence="1">
    <location>
        <position position="140"/>
    </location>
    <ligand>
        <name>NAD(+)</name>
        <dbReference type="ChEBI" id="CHEBI:57540"/>
    </ligand>
</feature>
<feature type="binding site" evidence="1">
    <location>
        <position position="149"/>
    </location>
    <ligand>
        <name>NAD(+)</name>
        <dbReference type="ChEBI" id="CHEBI:57540"/>
    </ligand>
</feature>
<feature type="binding site" evidence="1">
    <location>
        <begin position="167"/>
        <end position="170"/>
    </location>
    <ligand>
        <name>NAD(+)</name>
        <dbReference type="ChEBI" id="CHEBI:57540"/>
    </ligand>
</feature>
<feature type="binding site" evidence="1">
    <location>
        <position position="182"/>
    </location>
    <ligand>
        <name>Zn(2+)</name>
        <dbReference type="ChEBI" id="CHEBI:29105"/>
    </ligand>
</feature>
<feature type="binding site" evidence="1">
    <location>
        <position position="245"/>
    </location>
    <ligand>
        <name>Zn(2+)</name>
        <dbReference type="ChEBI" id="CHEBI:29105"/>
    </ligand>
</feature>
<feature type="binding site" evidence="1">
    <location>
        <position position="262"/>
    </location>
    <ligand>
        <name>Zn(2+)</name>
        <dbReference type="ChEBI" id="CHEBI:29105"/>
    </ligand>
</feature>
<organism>
    <name type="scientific">Aeromonas hydrophila subsp. hydrophila (strain ATCC 7966 / DSM 30187 / BCRC 13018 / CCUG 14551 / JCM 1027 / KCTC 2358 / NCIMB 9240 / NCTC 8049)</name>
    <dbReference type="NCBI Taxonomy" id="380703"/>
    <lineage>
        <taxon>Bacteria</taxon>
        <taxon>Pseudomonadati</taxon>
        <taxon>Pseudomonadota</taxon>
        <taxon>Gammaproteobacteria</taxon>
        <taxon>Aeromonadales</taxon>
        <taxon>Aeromonadaceae</taxon>
        <taxon>Aeromonas</taxon>
    </lineage>
</organism>
<proteinExistence type="inferred from homology"/>
<dbReference type="EC" id="4.2.3.4" evidence="1"/>
<dbReference type="EMBL" id="CP000462">
    <property type="protein sequence ID" value="ABK39312.1"/>
    <property type="molecule type" value="Genomic_DNA"/>
</dbReference>
<dbReference type="RefSeq" id="WP_011706965.1">
    <property type="nucleotide sequence ID" value="NC_008570.1"/>
</dbReference>
<dbReference type="RefSeq" id="YP_857679.1">
    <property type="nucleotide sequence ID" value="NC_008570.1"/>
</dbReference>
<dbReference type="SMR" id="A0KN28"/>
<dbReference type="STRING" id="380703.AHA_3188"/>
<dbReference type="EnsemblBacteria" id="ABK39312">
    <property type="protein sequence ID" value="ABK39312"/>
    <property type="gene ID" value="AHA_3188"/>
</dbReference>
<dbReference type="GeneID" id="4489344"/>
<dbReference type="KEGG" id="aha:AHA_3188"/>
<dbReference type="PATRIC" id="fig|380703.7.peg.3183"/>
<dbReference type="eggNOG" id="COG0337">
    <property type="taxonomic scope" value="Bacteria"/>
</dbReference>
<dbReference type="HOGENOM" id="CLU_001201_0_2_6"/>
<dbReference type="OrthoDB" id="9806583at2"/>
<dbReference type="UniPathway" id="UPA00053">
    <property type="reaction ID" value="UER00085"/>
</dbReference>
<dbReference type="Proteomes" id="UP000000756">
    <property type="component" value="Chromosome"/>
</dbReference>
<dbReference type="GO" id="GO:0005737">
    <property type="term" value="C:cytoplasm"/>
    <property type="evidence" value="ECO:0007669"/>
    <property type="project" value="UniProtKB-SubCell"/>
</dbReference>
<dbReference type="GO" id="GO:0003856">
    <property type="term" value="F:3-dehydroquinate synthase activity"/>
    <property type="evidence" value="ECO:0007669"/>
    <property type="project" value="UniProtKB-UniRule"/>
</dbReference>
<dbReference type="GO" id="GO:0046872">
    <property type="term" value="F:metal ion binding"/>
    <property type="evidence" value="ECO:0007669"/>
    <property type="project" value="UniProtKB-KW"/>
</dbReference>
<dbReference type="GO" id="GO:0000166">
    <property type="term" value="F:nucleotide binding"/>
    <property type="evidence" value="ECO:0007669"/>
    <property type="project" value="UniProtKB-KW"/>
</dbReference>
<dbReference type="GO" id="GO:0008652">
    <property type="term" value="P:amino acid biosynthetic process"/>
    <property type="evidence" value="ECO:0007669"/>
    <property type="project" value="UniProtKB-KW"/>
</dbReference>
<dbReference type="GO" id="GO:0009073">
    <property type="term" value="P:aromatic amino acid family biosynthetic process"/>
    <property type="evidence" value="ECO:0007669"/>
    <property type="project" value="UniProtKB-KW"/>
</dbReference>
<dbReference type="GO" id="GO:0009423">
    <property type="term" value="P:chorismate biosynthetic process"/>
    <property type="evidence" value="ECO:0007669"/>
    <property type="project" value="UniProtKB-UniRule"/>
</dbReference>
<dbReference type="CDD" id="cd08195">
    <property type="entry name" value="DHQS"/>
    <property type="match status" value="1"/>
</dbReference>
<dbReference type="FunFam" id="1.20.1090.10:FF:000002">
    <property type="entry name" value="3-dehydroquinate synthase"/>
    <property type="match status" value="1"/>
</dbReference>
<dbReference type="FunFam" id="3.40.50.1970:FF:000001">
    <property type="entry name" value="3-dehydroquinate synthase"/>
    <property type="match status" value="1"/>
</dbReference>
<dbReference type="Gene3D" id="3.40.50.1970">
    <property type="match status" value="1"/>
</dbReference>
<dbReference type="Gene3D" id="1.20.1090.10">
    <property type="entry name" value="Dehydroquinate synthase-like - alpha domain"/>
    <property type="match status" value="1"/>
</dbReference>
<dbReference type="HAMAP" id="MF_00110">
    <property type="entry name" value="DHQ_synthase"/>
    <property type="match status" value="1"/>
</dbReference>
<dbReference type="InterPro" id="IPR050071">
    <property type="entry name" value="Dehydroquinate_synthase"/>
</dbReference>
<dbReference type="InterPro" id="IPR016037">
    <property type="entry name" value="DHQ_synth_AroB"/>
</dbReference>
<dbReference type="InterPro" id="IPR030963">
    <property type="entry name" value="DHQ_synth_fam"/>
</dbReference>
<dbReference type="InterPro" id="IPR030960">
    <property type="entry name" value="DHQS/DOIS_N"/>
</dbReference>
<dbReference type="InterPro" id="IPR056179">
    <property type="entry name" value="DHQS_C"/>
</dbReference>
<dbReference type="NCBIfam" id="TIGR01357">
    <property type="entry name" value="aroB"/>
    <property type="match status" value="1"/>
</dbReference>
<dbReference type="PANTHER" id="PTHR43622">
    <property type="entry name" value="3-DEHYDROQUINATE SYNTHASE"/>
    <property type="match status" value="1"/>
</dbReference>
<dbReference type="PANTHER" id="PTHR43622:SF7">
    <property type="entry name" value="3-DEHYDROQUINATE SYNTHASE, CHLOROPLASTIC"/>
    <property type="match status" value="1"/>
</dbReference>
<dbReference type="Pfam" id="PF01761">
    <property type="entry name" value="DHQ_synthase"/>
    <property type="match status" value="1"/>
</dbReference>
<dbReference type="Pfam" id="PF24621">
    <property type="entry name" value="DHQS_C"/>
    <property type="match status" value="1"/>
</dbReference>
<dbReference type="PIRSF" id="PIRSF001455">
    <property type="entry name" value="DHQ_synth"/>
    <property type="match status" value="1"/>
</dbReference>
<dbReference type="SUPFAM" id="SSF56796">
    <property type="entry name" value="Dehydroquinate synthase-like"/>
    <property type="match status" value="1"/>
</dbReference>
<protein>
    <recommendedName>
        <fullName evidence="1">3-dehydroquinate synthase</fullName>
        <shortName evidence="1">DHQS</shortName>
        <ecNumber evidence="1">4.2.3.4</ecNumber>
    </recommendedName>
</protein>
<reference key="1">
    <citation type="journal article" date="2006" name="J. Bacteriol.">
        <title>Genome sequence of Aeromonas hydrophila ATCC 7966T: jack of all trades.</title>
        <authorList>
            <person name="Seshadri R."/>
            <person name="Joseph S.W."/>
            <person name="Chopra A.K."/>
            <person name="Sha J."/>
            <person name="Shaw J."/>
            <person name="Graf J."/>
            <person name="Haft D.H."/>
            <person name="Wu M."/>
            <person name="Ren Q."/>
            <person name="Rosovitz M.J."/>
            <person name="Madupu R."/>
            <person name="Tallon L."/>
            <person name="Kim M."/>
            <person name="Jin S."/>
            <person name="Vuong H."/>
            <person name="Stine O.C."/>
            <person name="Ali A."/>
            <person name="Horneman A.J."/>
            <person name="Heidelberg J.F."/>
        </authorList>
    </citation>
    <scope>NUCLEOTIDE SEQUENCE [LARGE SCALE GENOMIC DNA]</scope>
    <source>
        <strain>ATCC 7966 / DSM 30187 / BCRC 13018 / CCUG 14551 / JCM 1027 / KCTC 2358 / NCIMB 9240 / NCTC 8049</strain>
    </source>
</reference>
<sequence length="360" mass="39179">MERLKVELGERSYPIEIAAGLLQHAEVLTQTIKGKRVMIVTNTVVAPLYLERIVQLLSGYQVEHLILPDGEAYKTLATFERIMSALLETNHGRDTTLIALGGGVIGDVVGFAAASYQRGIPFIQVPTTLLSQVDSSVGGKTAVNHPLGKNMIGAFYQPRHVVIDTECLQTLPAREFAAGMAEVIKYGIIWDVEFFCWLEANMSRLQAQEPAALAYAIRRCCEIKADVVGQDETEHGVRALLNLGHTFGHAIEAEKGYGNWLHGEAVAAGTMLAANTALARGDVTEQQVDRIRALLLAANLPVTAPPEMDFAAFIRHMRRDKKVLEGKLRLVLPVGIGHAQVVADVSDAELLAVIESGRDE</sequence>
<gene>
    <name evidence="1" type="primary">aroB</name>
    <name type="ordered locus">AHA_3188</name>
</gene>
<comment type="function">
    <text evidence="1">Catalyzes the conversion of 3-deoxy-D-arabino-heptulosonate 7-phosphate (DAHP) to dehydroquinate (DHQ).</text>
</comment>
<comment type="catalytic activity">
    <reaction evidence="1">
        <text>7-phospho-2-dehydro-3-deoxy-D-arabino-heptonate = 3-dehydroquinate + phosphate</text>
        <dbReference type="Rhea" id="RHEA:21968"/>
        <dbReference type="ChEBI" id="CHEBI:32364"/>
        <dbReference type="ChEBI" id="CHEBI:43474"/>
        <dbReference type="ChEBI" id="CHEBI:58394"/>
        <dbReference type="EC" id="4.2.3.4"/>
    </reaction>
</comment>
<comment type="cofactor">
    <cofactor evidence="1">
        <name>Co(2+)</name>
        <dbReference type="ChEBI" id="CHEBI:48828"/>
    </cofactor>
    <cofactor evidence="1">
        <name>Zn(2+)</name>
        <dbReference type="ChEBI" id="CHEBI:29105"/>
    </cofactor>
    <text evidence="1">Binds 1 divalent metal cation per subunit. Can use either Co(2+) or Zn(2+).</text>
</comment>
<comment type="cofactor">
    <cofactor evidence="1">
        <name>NAD(+)</name>
        <dbReference type="ChEBI" id="CHEBI:57540"/>
    </cofactor>
</comment>
<comment type="pathway">
    <text evidence="1">Metabolic intermediate biosynthesis; chorismate biosynthesis; chorismate from D-erythrose 4-phosphate and phosphoenolpyruvate: step 2/7.</text>
</comment>
<comment type="subcellular location">
    <subcellularLocation>
        <location evidence="1">Cytoplasm</location>
    </subcellularLocation>
</comment>
<comment type="similarity">
    <text evidence="1">Belongs to the sugar phosphate cyclases superfamily. Dehydroquinate synthase family.</text>
</comment>
<evidence type="ECO:0000255" key="1">
    <source>
        <dbReference type="HAMAP-Rule" id="MF_00110"/>
    </source>
</evidence>